<gene>
    <name evidence="1" type="primary">rodZ</name>
    <name type="ordered locus">SeAg_B2676</name>
</gene>
<organism>
    <name type="scientific">Salmonella agona (strain SL483)</name>
    <dbReference type="NCBI Taxonomy" id="454166"/>
    <lineage>
        <taxon>Bacteria</taxon>
        <taxon>Pseudomonadati</taxon>
        <taxon>Pseudomonadota</taxon>
        <taxon>Gammaproteobacteria</taxon>
        <taxon>Enterobacterales</taxon>
        <taxon>Enterobacteriaceae</taxon>
        <taxon>Salmonella</taxon>
    </lineage>
</organism>
<evidence type="ECO:0000255" key="1">
    <source>
        <dbReference type="HAMAP-Rule" id="MF_02017"/>
    </source>
</evidence>
<evidence type="ECO:0000256" key="2">
    <source>
        <dbReference type="SAM" id="MobiDB-lite"/>
    </source>
</evidence>
<reference key="1">
    <citation type="journal article" date="2011" name="J. Bacteriol.">
        <title>Comparative genomics of 28 Salmonella enterica isolates: evidence for CRISPR-mediated adaptive sublineage evolution.</title>
        <authorList>
            <person name="Fricke W.F."/>
            <person name="Mammel M.K."/>
            <person name="McDermott P.F."/>
            <person name="Tartera C."/>
            <person name="White D.G."/>
            <person name="Leclerc J.E."/>
            <person name="Ravel J."/>
            <person name="Cebula T.A."/>
        </authorList>
    </citation>
    <scope>NUCLEOTIDE SEQUENCE [LARGE SCALE GENOMIC DNA]</scope>
    <source>
        <strain>SL483</strain>
    </source>
</reference>
<proteinExistence type="inferred from homology"/>
<sequence length="334" mass="35659">MNTEATHDQNEAQTTGVRLRNAREQLGLSQQAVAERLCLKVSTVRDIEEDKAPSDLASTFLRGYIRSYARLVHVPEEELLPGLEKQAPLRAAKVAPMQSFSLGKRRKKRDGWLMSFTWLVLFVVVGLTGAWWWQNHKAQQEEITTMADQSTAELNADKDSGQSVPLDTGAATSQDTTPAQTAPAPATPVDSTAATQTPAPTAAATQNTVVAPSQANVDTAATSAAPAATETPSALPTSQAGVAAPAADPNALVMNFTADCWLEVTDATGKKLFSGMQRKDGNLNLTGQAPYKLKIGAPAAVQIQYQGKPVDLSRFIRTNQVARLTLNAEPTPAQ</sequence>
<dbReference type="EMBL" id="CP001138">
    <property type="protein sequence ID" value="ACH51077.1"/>
    <property type="molecule type" value="Genomic_DNA"/>
</dbReference>
<dbReference type="RefSeq" id="WP_001090890.1">
    <property type="nucleotide sequence ID" value="NC_011149.1"/>
</dbReference>
<dbReference type="SMR" id="B5F199"/>
<dbReference type="KEGG" id="sea:SeAg_B2676"/>
<dbReference type="HOGENOM" id="CLU_047530_3_1_6"/>
<dbReference type="Proteomes" id="UP000008819">
    <property type="component" value="Chromosome"/>
</dbReference>
<dbReference type="GO" id="GO:0005886">
    <property type="term" value="C:plasma membrane"/>
    <property type="evidence" value="ECO:0007669"/>
    <property type="project" value="UniProtKB-SubCell"/>
</dbReference>
<dbReference type="GO" id="GO:0003677">
    <property type="term" value="F:DNA binding"/>
    <property type="evidence" value="ECO:0007669"/>
    <property type="project" value="UniProtKB-KW"/>
</dbReference>
<dbReference type="GO" id="GO:0008360">
    <property type="term" value="P:regulation of cell shape"/>
    <property type="evidence" value="ECO:0007669"/>
    <property type="project" value="UniProtKB-UniRule"/>
</dbReference>
<dbReference type="CDD" id="cd00093">
    <property type="entry name" value="HTH_XRE"/>
    <property type="match status" value="1"/>
</dbReference>
<dbReference type="FunFam" id="1.10.260.40:FF:000014">
    <property type="entry name" value="Cytoskeleton protein RodZ"/>
    <property type="match status" value="1"/>
</dbReference>
<dbReference type="Gene3D" id="1.10.260.40">
    <property type="entry name" value="lambda repressor-like DNA-binding domains"/>
    <property type="match status" value="1"/>
</dbReference>
<dbReference type="HAMAP" id="MF_02017">
    <property type="entry name" value="RodZ"/>
    <property type="match status" value="1"/>
</dbReference>
<dbReference type="InterPro" id="IPR050400">
    <property type="entry name" value="Bact_Cytoskel_RodZ"/>
</dbReference>
<dbReference type="InterPro" id="IPR001387">
    <property type="entry name" value="Cro/C1-type_HTH"/>
</dbReference>
<dbReference type="InterPro" id="IPR010982">
    <property type="entry name" value="Lambda_DNA-bd_dom_sf"/>
</dbReference>
<dbReference type="InterPro" id="IPR023690">
    <property type="entry name" value="RodZ"/>
</dbReference>
<dbReference type="InterPro" id="IPR025194">
    <property type="entry name" value="RodZ-like_C"/>
</dbReference>
<dbReference type="NCBIfam" id="NF008109">
    <property type="entry name" value="PRK10856.1"/>
    <property type="match status" value="1"/>
</dbReference>
<dbReference type="PANTHER" id="PTHR34475">
    <property type="match status" value="1"/>
</dbReference>
<dbReference type="PANTHER" id="PTHR34475:SF1">
    <property type="entry name" value="CYTOSKELETON PROTEIN RODZ"/>
    <property type="match status" value="1"/>
</dbReference>
<dbReference type="Pfam" id="PF13413">
    <property type="entry name" value="HTH_25"/>
    <property type="match status" value="1"/>
</dbReference>
<dbReference type="Pfam" id="PF13464">
    <property type="entry name" value="RodZ_C"/>
    <property type="match status" value="1"/>
</dbReference>
<dbReference type="SMART" id="SM00530">
    <property type="entry name" value="HTH_XRE"/>
    <property type="match status" value="1"/>
</dbReference>
<dbReference type="SUPFAM" id="SSF47413">
    <property type="entry name" value="lambda repressor-like DNA-binding domains"/>
    <property type="match status" value="1"/>
</dbReference>
<dbReference type="PROSITE" id="PS50943">
    <property type="entry name" value="HTH_CROC1"/>
    <property type="match status" value="1"/>
</dbReference>
<feature type="chain" id="PRO_0000361847" description="Cytoskeleton protein RodZ">
    <location>
        <begin position="1"/>
        <end position="334"/>
    </location>
</feature>
<feature type="topological domain" description="Cytoplasmic" evidence="1">
    <location>
        <begin position="1"/>
        <end position="111"/>
    </location>
</feature>
<feature type="transmembrane region" description="Helical; Signal-anchor for type II membrane protein" evidence="1">
    <location>
        <begin position="112"/>
        <end position="132"/>
    </location>
</feature>
<feature type="topological domain" description="Periplasmic" evidence="1">
    <location>
        <begin position="133"/>
        <end position="334"/>
    </location>
</feature>
<feature type="domain" description="HTH cro/C1-type" evidence="1">
    <location>
        <begin position="19"/>
        <end position="71"/>
    </location>
</feature>
<feature type="DNA-binding region" description="H-T-H motif" evidence="1">
    <location>
        <begin position="30"/>
        <end position="49"/>
    </location>
</feature>
<feature type="region of interest" description="Disordered" evidence="2">
    <location>
        <begin position="155"/>
        <end position="241"/>
    </location>
</feature>
<feature type="compositionally biased region" description="Low complexity" evidence="2">
    <location>
        <begin position="170"/>
        <end position="211"/>
    </location>
</feature>
<feature type="compositionally biased region" description="Low complexity" evidence="2">
    <location>
        <begin position="219"/>
        <end position="241"/>
    </location>
</feature>
<protein>
    <recommendedName>
        <fullName evidence="1">Cytoskeleton protein RodZ</fullName>
    </recommendedName>
</protein>
<accession>B5F199</accession>
<name>RODZ_SALA4</name>
<keyword id="KW-0997">Cell inner membrane</keyword>
<keyword id="KW-1003">Cell membrane</keyword>
<keyword id="KW-0133">Cell shape</keyword>
<keyword id="KW-0238">DNA-binding</keyword>
<keyword id="KW-0472">Membrane</keyword>
<keyword id="KW-0735">Signal-anchor</keyword>
<keyword id="KW-0812">Transmembrane</keyword>
<keyword id="KW-1133">Transmembrane helix</keyword>
<comment type="function">
    <text evidence="1">Cytoskeletal protein that is involved in cell-shape control through regulation of the length of the long axis.</text>
</comment>
<comment type="subcellular location">
    <subcellularLocation>
        <location evidence="1">Cell inner membrane</location>
        <topology evidence="1">Single-pass type II membrane protein</topology>
    </subcellularLocation>
    <text evidence="1">Forms helical filaments along the long axis of the cell.</text>
</comment>
<comment type="domain">
    <text evidence="1">The helix-turn-helix (HTH) motif in the cytoplasmic domain of the N-terminus is involved in the formation of spirals to maintain the rigid rod shape. As this protein is anchored in the cytoplasmic membrane, the HTH motif may contribute to protein-protein interactions to form the RodZ helix, which is localized beneath the cytoplasmic membrane. The C-terminal domain may be critical for determination of the rod shape by probably interacting with enzymes required for synthesis of the peptidoglycan layer, including PBPs in the periplasm.</text>
</comment>
<comment type="similarity">
    <text evidence="1">Belongs to the RodZ family.</text>
</comment>